<protein>
    <recommendedName>
        <fullName evidence="1">Large ribosomal subunit protein uL5</fullName>
    </recommendedName>
    <alternativeName>
        <fullName evidence="2">50S ribosomal protein L5</fullName>
    </alternativeName>
</protein>
<accession>A3P0A1</accession>
<gene>
    <name evidence="1" type="primary">rplE</name>
    <name type="ordered locus">BURPS1106A_3792</name>
</gene>
<evidence type="ECO:0000255" key="1">
    <source>
        <dbReference type="HAMAP-Rule" id="MF_01333"/>
    </source>
</evidence>
<evidence type="ECO:0000305" key="2"/>
<proteinExistence type="inferred from homology"/>
<name>RL5_BURP0</name>
<reference key="1">
    <citation type="journal article" date="2010" name="Genome Biol. Evol.">
        <title>Continuing evolution of Burkholderia mallei through genome reduction and large-scale rearrangements.</title>
        <authorList>
            <person name="Losada L."/>
            <person name="Ronning C.M."/>
            <person name="DeShazer D."/>
            <person name="Woods D."/>
            <person name="Fedorova N."/>
            <person name="Kim H.S."/>
            <person name="Shabalina S.A."/>
            <person name="Pearson T.R."/>
            <person name="Brinkac L."/>
            <person name="Tan P."/>
            <person name="Nandi T."/>
            <person name="Crabtree J."/>
            <person name="Badger J."/>
            <person name="Beckstrom-Sternberg S."/>
            <person name="Saqib M."/>
            <person name="Schutzer S.E."/>
            <person name="Keim P."/>
            <person name="Nierman W.C."/>
        </authorList>
    </citation>
    <scope>NUCLEOTIDE SEQUENCE [LARGE SCALE GENOMIC DNA]</scope>
    <source>
        <strain>1106a</strain>
    </source>
</reference>
<dbReference type="EMBL" id="CP000572">
    <property type="protein sequence ID" value="ABN91192.1"/>
    <property type="molecule type" value="Genomic_DNA"/>
</dbReference>
<dbReference type="RefSeq" id="WP_004202757.1">
    <property type="nucleotide sequence ID" value="NC_009076.1"/>
</dbReference>
<dbReference type="SMR" id="A3P0A1"/>
<dbReference type="GeneID" id="93061820"/>
<dbReference type="KEGG" id="bpl:BURPS1106A_3792"/>
<dbReference type="HOGENOM" id="CLU_061015_2_1_4"/>
<dbReference type="Proteomes" id="UP000006738">
    <property type="component" value="Chromosome I"/>
</dbReference>
<dbReference type="GO" id="GO:1990904">
    <property type="term" value="C:ribonucleoprotein complex"/>
    <property type="evidence" value="ECO:0007669"/>
    <property type="project" value="UniProtKB-KW"/>
</dbReference>
<dbReference type="GO" id="GO:0005840">
    <property type="term" value="C:ribosome"/>
    <property type="evidence" value="ECO:0007669"/>
    <property type="project" value="UniProtKB-KW"/>
</dbReference>
<dbReference type="GO" id="GO:0019843">
    <property type="term" value="F:rRNA binding"/>
    <property type="evidence" value="ECO:0007669"/>
    <property type="project" value="UniProtKB-UniRule"/>
</dbReference>
<dbReference type="GO" id="GO:0003735">
    <property type="term" value="F:structural constituent of ribosome"/>
    <property type="evidence" value="ECO:0007669"/>
    <property type="project" value="InterPro"/>
</dbReference>
<dbReference type="GO" id="GO:0000049">
    <property type="term" value="F:tRNA binding"/>
    <property type="evidence" value="ECO:0007669"/>
    <property type="project" value="UniProtKB-UniRule"/>
</dbReference>
<dbReference type="GO" id="GO:0006412">
    <property type="term" value="P:translation"/>
    <property type="evidence" value="ECO:0007669"/>
    <property type="project" value="UniProtKB-UniRule"/>
</dbReference>
<dbReference type="FunFam" id="3.30.1440.10:FF:000001">
    <property type="entry name" value="50S ribosomal protein L5"/>
    <property type="match status" value="1"/>
</dbReference>
<dbReference type="Gene3D" id="3.30.1440.10">
    <property type="match status" value="1"/>
</dbReference>
<dbReference type="HAMAP" id="MF_01333_B">
    <property type="entry name" value="Ribosomal_uL5_B"/>
    <property type="match status" value="1"/>
</dbReference>
<dbReference type="InterPro" id="IPR002132">
    <property type="entry name" value="Ribosomal_uL5"/>
</dbReference>
<dbReference type="InterPro" id="IPR020930">
    <property type="entry name" value="Ribosomal_uL5_bac-type"/>
</dbReference>
<dbReference type="InterPro" id="IPR031309">
    <property type="entry name" value="Ribosomal_uL5_C"/>
</dbReference>
<dbReference type="InterPro" id="IPR020929">
    <property type="entry name" value="Ribosomal_uL5_CS"/>
</dbReference>
<dbReference type="InterPro" id="IPR022803">
    <property type="entry name" value="Ribosomal_uL5_dom_sf"/>
</dbReference>
<dbReference type="InterPro" id="IPR031310">
    <property type="entry name" value="Ribosomal_uL5_N"/>
</dbReference>
<dbReference type="NCBIfam" id="NF000585">
    <property type="entry name" value="PRK00010.1"/>
    <property type="match status" value="1"/>
</dbReference>
<dbReference type="PANTHER" id="PTHR11994">
    <property type="entry name" value="60S RIBOSOMAL PROTEIN L11-RELATED"/>
    <property type="match status" value="1"/>
</dbReference>
<dbReference type="Pfam" id="PF00281">
    <property type="entry name" value="Ribosomal_L5"/>
    <property type="match status" value="1"/>
</dbReference>
<dbReference type="Pfam" id="PF00673">
    <property type="entry name" value="Ribosomal_L5_C"/>
    <property type="match status" value="1"/>
</dbReference>
<dbReference type="PIRSF" id="PIRSF002161">
    <property type="entry name" value="Ribosomal_L5"/>
    <property type="match status" value="1"/>
</dbReference>
<dbReference type="SUPFAM" id="SSF55282">
    <property type="entry name" value="RL5-like"/>
    <property type="match status" value="1"/>
</dbReference>
<dbReference type="PROSITE" id="PS00358">
    <property type="entry name" value="RIBOSOMAL_L5"/>
    <property type="match status" value="1"/>
</dbReference>
<sequence length="179" mass="20027">MARFQEFYKEKVVPGLIEKFGYKSVMEVPRITKITLNMGLGEAVADKKIIENAVGDLTKIAGQKPVVTKARKAIAGFKIRQGYPIGAMVTLRGRAMYEFLDRFVTVALPRVRDFRGVSGRAFDGRGNYNIGVKEQIIFPEIDYDKIDALRGLNISITTTAKTDDEAKALLASFKFPFRN</sequence>
<organism>
    <name type="scientific">Burkholderia pseudomallei (strain 1106a)</name>
    <dbReference type="NCBI Taxonomy" id="357348"/>
    <lineage>
        <taxon>Bacteria</taxon>
        <taxon>Pseudomonadati</taxon>
        <taxon>Pseudomonadota</taxon>
        <taxon>Betaproteobacteria</taxon>
        <taxon>Burkholderiales</taxon>
        <taxon>Burkholderiaceae</taxon>
        <taxon>Burkholderia</taxon>
        <taxon>pseudomallei group</taxon>
    </lineage>
</organism>
<keyword id="KW-0687">Ribonucleoprotein</keyword>
<keyword id="KW-0689">Ribosomal protein</keyword>
<keyword id="KW-0694">RNA-binding</keyword>
<keyword id="KW-0699">rRNA-binding</keyword>
<keyword id="KW-0820">tRNA-binding</keyword>
<feature type="chain" id="PRO_1000052707" description="Large ribosomal subunit protein uL5">
    <location>
        <begin position="1"/>
        <end position="179"/>
    </location>
</feature>
<comment type="function">
    <text evidence="1">This is one of the proteins that bind and probably mediate the attachment of the 5S RNA into the large ribosomal subunit, where it forms part of the central protuberance. In the 70S ribosome it contacts protein S13 of the 30S subunit (bridge B1b), connecting the 2 subunits; this bridge is implicated in subunit movement. Contacts the P site tRNA; the 5S rRNA and some of its associated proteins might help stabilize positioning of ribosome-bound tRNAs.</text>
</comment>
<comment type="subunit">
    <text evidence="1">Part of the 50S ribosomal subunit; part of the 5S rRNA/L5/L18/L25 subcomplex. Contacts the 5S rRNA and the P site tRNA. Forms a bridge to the 30S subunit in the 70S ribosome.</text>
</comment>
<comment type="similarity">
    <text evidence="1">Belongs to the universal ribosomal protein uL5 family.</text>
</comment>